<gene>
    <name type="primary">COL1A2</name>
</gene>
<name>CO1A2_BOVIN</name>
<feature type="signal peptide" evidence="2">
    <location>
        <begin position="1"/>
        <end position="22"/>
    </location>
</feature>
<feature type="propeptide" id="PRO_0000005798" description="N-terminal propeptide" evidence="10">
    <location>
        <begin position="23"/>
        <end position="79"/>
    </location>
</feature>
<feature type="chain" id="PRO_0000005799" description="Collagen alpha-2(I) chain">
    <location>
        <begin position="80"/>
        <end position="1117"/>
    </location>
</feature>
<feature type="propeptide" id="PRO_0000005800" description="C-terminal propeptide" evidence="3">
    <location>
        <begin position="1118"/>
        <end position="1364"/>
    </location>
</feature>
<feature type="domain" description="Fibrillar collagen NC1" evidence="6">
    <location>
        <begin position="1131"/>
        <end position="1364"/>
    </location>
</feature>
<feature type="region of interest" description="Disordered" evidence="7">
    <location>
        <begin position="26"/>
        <end position="1128"/>
    </location>
</feature>
<feature type="compositionally biased region" description="Basic and acidic residues" evidence="7">
    <location>
        <begin position="34"/>
        <end position="44"/>
    </location>
</feature>
<feature type="compositionally biased region" description="Pro residues" evidence="7">
    <location>
        <begin position="59"/>
        <end position="71"/>
    </location>
</feature>
<feature type="compositionally biased region" description="Low complexity" evidence="7">
    <location>
        <begin position="93"/>
        <end position="130"/>
    </location>
</feature>
<feature type="compositionally biased region" description="Basic and acidic residues" evidence="7">
    <location>
        <begin position="139"/>
        <end position="153"/>
    </location>
</feature>
<feature type="compositionally biased region" description="Low complexity" evidence="7">
    <location>
        <begin position="223"/>
        <end position="252"/>
    </location>
</feature>
<feature type="compositionally biased region" description="Low complexity" evidence="7">
    <location>
        <begin position="277"/>
        <end position="291"/>
    </location>
</feature>
<feature type="compositionally biased region" description="Low complexity" evidence="7">
    <location>
        <begin position="298"/>
        <end position="319"/>
    </location>
</feature>
<feature type="compositionally biased region" description="Low complexity" evidence="7">
    <location>
        <begin position="328"/>
        <end position="343"/>
    </location>
</feature>
<feature type="compositionally biased region" description="Low complexity" evidence="7">
    <location>
        <begin position="396"/>
        <end position="406"/>
    </location>
</feature>
<feature type="compositionally biased region" description="Low complexity" evidence="7">
    <location>
        <begin position="468"/>
        <end position="487"/>
    </location>
</feature>
<feature type="compositionally biased region" description="Low complexity" evidence="7">
    <location>
        <begin position="511"/>
        <end position="535"/>
    </location>
</feature>
<feature type="compositionally biased region" description="Gly residues" evidence="7">
    <location>
        <begin position="536"/>
        <end position="545"/>
    </location>
</feature>
<feature type="compositionally biased region" description="Low complexity" evidence="7">
    <location>
        <begin position="592"/>
        <end position="609"/>
    </location>
</feature>
<feature type="compositionally biased region" description="Low complexity" evidence="7">
    <location>
        <begin position="621"/>
        <end position="643"/>
    </location>
</feature>
<feature type="compositionally biased region" description="Low complexity" evidence="7">
    <location>
        <begin position="666"/>
        <end position="688"/>
    </location>
</feature>
<feature type="compositionally biased region" description="Low complexity" evidence="7">
    <location>
        <begin position="715"/>
        <end position="735"/>
    </location>
</feature>
<feature type="compositionally biased region" description="Basic and acidic residues" evidence="7">
    <location>
        <begin position="736"/>
        <end position="745"/>
    </location>
</feature>
<feature type="compositionally biased region" description="Low complexity" evidence="7">
    <location>
        <begin position="748"/>
        <end position="763"/>
    </location>
</feature>
<feature type="compositionally biased region" description="Gly residues" evidence="7">
    <location>
        <begin position="773"/>
        <end position="782"/>
    </location>
</feature>
<feature type="compositionally biased region" description="Low complexity" evidence="7">
    <location>
        <begin position="783"/>
        <end position="793"/>
    </location>
</feature>
<feature type="compositionally biased region" description="Low complexity" evidence="7">
    <location>
        <begin position="861"/>
        <end position="874"/>
    </location>
</feature>
<feature type="compositionally biased region" description="Low complexity" evidence="7">
    <location>
        <begin position="891"/>
        <end position="930"/>
    </location>
</feature>
<feature type="compositionally biased region" description="Low complexity" evidence="7">
    <location>
        <begin position="948"/>
        <end position="961"/>
    </location>
</feature>
<feature type="compositionally biased region" description="Low complexity" evidence="7">
    <location>
        <begin position="978"/>
        <end position="999"/>
    </location>
</feature>
<feature type="compositionally biased region" description="Basic and acidic residues" evidence="7">
    <location>
        <begin position="1003"/>
        <end position="1014"/>
    </location>
</feature>
<feature type="compositionally biased region" description="Pro residues" evidence="7">
    <location>
        <begin position="1087"/>
        <end position="1101"/>
    </location>
</feature>
<feature type="binding site" evidence="4">
    <location>
        <position position="1179"/>
    </location>
    <ligand>
        <name>Ca(2+)</name>
        <dbReference type="ChEBI" id="CHEBI:29108"/>
    </ligand>
</feature>
<feature type="binding site" evidence="4">
    <location>
        <position position="1181"/>
    </location>
    <ligand>
        <name>Ca(2+)</name>
        <dbReference type="ChEBI" id="CHEBI:29108"/>
    </ligand>
</feature>
<feature type="binding site" evidence="4">
    <location>
        <position position="1182"/>
    </location>
    <ligand>
        <name>Ca(2+)</name>
        <dbReference type="ChEBI" id="CHEBI:29108"/>
    </ligand>
</feature>
<feature type="binding site" evidence="4">
    <location>
        <position position="1184"/>
    </location>
    <ligand>
        <name>Ca(2+)</name>
        <dbReference type="ChEBI" id="CHEBI:29108"/>
    </ligand>
</feature>
<feature type="binding site" evidence="4">
    <location>
        <position position="1187"/>
    </location>
    <ligand>
        <name>Ca(2+)</name>
        <dbReference type="ChEBI" id="CHEBI:29108"/>
    </ligand>
</feature>
<feature type="modified residue" description="Pyrrolidone carboxylic acid" evidence="3">
    <location>
        <position position="23"/>
    </location>
</feature>
<feature type="modified residue" description="Pyrrolidone carboxylic acid" evidence="10">
    <location>
        <position position="80"/>
    </location>
</feature>
<feature type="modified residue" description="Allysine" evidence="12">
    <location>
        <position position="84"/>
    </location>
</feature>
<feature type="modified residue" description="4-hydroxyproline" evidence="8">
    <location>
        <position position="100"/>
    </location>
</feature>
<feature type="modified residue" description="4-hydroxyproline" evidence="8">
    <location>
        <position position="106"/>
    </location>
</feature>
<feature type="modified residue" description="4-hydroxyproline" evidence="8">
    <location>
        <position position="115"/>
    </location>
</feature>
<feature type="modified residue" description="4-hydroxyproline" evidence="8">
    <location>
        <position position="118"/>
    </location>
</feature>
<feature type="modified residue" description="4-hydroxyproline" evidence="8">
    <location>
        <position position="121"/>
    </location>
</feature>
<feature type="modified residue" description="4-hydroxyproline" evidence="8">
    <location>
        <position position="133"/>
    </location>
</feature>
<feature type="modified residue" description="4-hydroxyproline" evidence="8">
    <location>
        <position position="136"/>
    </location>
</feature>
<feature type="modified residue" description="4-hydroxyproline" evidence="8">
    <location>
        <position position="145"/>
    </location>
</feature>
<feature type="modified residue" description="4-hydroxyproline" evidence="8">
    <location>
        <position position="151"/>
    </location>
</feature>
<feature type="modified residue" description="4-hydroxyproline" evidence="8">
    <location>
        <position position="166"/>
    </location>
</feature>
<feature type="modified residue" description="4-hydroxyproline" evidence="8">
    <location>
        <position position="169"/>
    </location>
</feature>
<feature type="modified residue" description="4-hydroxyproline" evidence="8">
    <location>
        <position position="172"/>
    </location>
</feature>
<feature type="modified residue" description="5-hydroxylysine; alternate" evidence="8">
    <location>
        <position position="175"/>
    </location>
</feature>
<feature type="modified residue" description="4-hydroxyproline" evidence="8">
    <location>
        <position position="190"/>
    </location>
</feature>
<feature type="modified residue" description="4-hydroxyproline" evidence="8">
    <location>
        <position position="193"/>
    </location>
</feature>
<feature type="modified residue" description="5-hydroxylysine" evidence="8">
    <location>
        <position position="196"/>
    </location>
</feature>
<feature type="modified residue" description="4-hydroxyproline" evidence="8">
    <location>
        <position position="199"/>
    </location>
</feature>
<feature type="modified residue" description="4-hydroxyproline" evidence="8">
    <location>
        <position position="202"/>
    </location>
</feature>
<feature type="modified residue" description="4-hydroxyproline" evidence="8">
    <location>
        <position position="208"/>
    </location>
</feature>
<feature type="modified residue" description="4-hydroxyproline" evidence="8">
    <location>
        <position position="217"/>
    </location>
</feature>
<feature type="modified residue" description="4-hydroxyproline" evidence="8">
    <location>
        <position position="226"/>
    </location>
</feature>
<feature type="modified residue" description="4-hydroxyproline" evidence="8">
    <location>
        <position position="253"/>
    </location>
</feature>
<feature type="modified residue" description="4-hydroxyproline" evidence="8">
    <location>
        <position position="256"/>
    </location>
</feature>
<feature type="modified residue" description="4-hydroxyproline" evidence="8">
    <location>
        <position position="259"/>
    </location>
</feature>
<feature type="modified residue" description="5-hydroxylysine" evidence="8">
    <location>
        <position position="262"/>
    </location>
</feature>
<feature type="modified residue" description="4-hydroxyproline" evidence="8">
    <location>
        <position position="271"/>
    </location>
</feature>
<feature type="modified residue" description="4-hydroxyproline" evidence="8">
    <location>
        <position position="286"/>
    </location>
</feature>
<feature type="modified residue" description="4-hydroxyproline" evidence="8">
    <location>
        <position position="295"/>
    </location>
</feature>
<feature type="modified residue" description="4-hydroxyproline" evidence="8">
    <location>
        <position position="304"/>
    </location>
</feature>
<feature type="modified residue" description="5-hydroxylysine" evidence="8">
    <location>
        <position position="307"/>
    </location>
</feature>
<feature type="modified residue" description="4-hydroxyproline" evidence="8">
    <location>
        <position position="313"/>
    </location>
</feature>
<feature type="modified residue" description="4-hydroxyproline" evidence="8">
    <location>
        <position position="319"/>
    </location>
</feature>
<feature type="modified residue" description="4-hydroxyproline" evidence="8">
    <location>
        <position position="322"/>
    </location>
</feature>
<feature type="modified residue" description="4-hydroxyproline" evidence="8">
    <location>
        <position position="328"/>
    </location>
</feature>
<feature type="modified residue" description="4-hydroxyproline" evidence="8">
    <location>
        <position position="346"/>
    </location>
</feature>
<feature type="modified residue" description="5-hydroxylysine" evidence="8">
    <location>
        <position position="352"/>
    </location>
</feature>
<feature type="modified residue" description="4-hydroxyproline" evidence="8">
    <location>
        <position position="361"/>
    </location>
</feature>
<feature type="modified residue" description="4-hydroxyproline" evidence="8">
    <location>
        <position position="367"/>
    </location>
</feature>
<feature type="modified residue" description="4-hydroxyproline" evidence="8">
    <location>
        <position position="370"/>
    </location>
</feature>
<feature type="modified residue" description="4-hydroxyproline" evidence="8">
    <location>
        <position position="391"/>
    </location>
</feature>
<feature type="modified residue" description="4-hydroxyproline" evidence="8">
    <location>
        <position position="394"/>
    </location>
</feature>
<feature type="modified residue" description="4-hydroxyproline" evidence="8">
    <location>
        <position position="400"/>
    </location>
</feature>
<feature type="modified residue" description="4-hydroxyproline" evidence="8">
    <location>
        <position position="406"/>
    </location>
</feature>
<feature type="modified residue" description="4-hydroxyproline" evidence="9">
    <location>
        <position position="439"/>
    </location>
</feature>
<feature type="modified residue" description="4-hydroxyproline" evidence="9">
    <location>
        <position position="442"/>
    </location>
</feature>
<feature type="glycosylation site" description="O-linked (Gal...) hydroxylysine; alternate" evidence="3">
    <location>
        <position position="175"/>
    </location>
</feature>
<feature type="glycosylation site" description="N-linked (GlcNAc...) asparagine" evidence="5">
    <location>
        <position position="1265"/>
    </location>
</feature>
<feature type="disulfide bond" evidence="6">
    <location>
        <begin position="1161"/>
        <end position="1193"/>
    </location>
</feature>
<feature type="disulfide bond" evidence="6">
    <location>
        <begin position="1201"/>
        <end position="1362"/>
    </location>
</feature>
<feature type="disulfide bond" evidence="6">
    <location>
        <begin position="1270"/>
        <end position="1315"/>
    </location>
</feature>
<feature type="sequence conflict" description="In Ref. 4; AA sequence." evidence="11" ref="4">
    <original>V</original>
    <variation>P</variation>
    <location>
        <position position="157"/>
    </location>
</feature>
<feature type="sequence conflict" description="In Ref. 4; AA sequence." evidence="11" ref="4">
    <original>K</original>
    <variation>T</variation>
    <location>
        <position position="187"/>
    </location>
</feature>
<feature type="sequence conflict" description="In Ref. 4; AA sequence." evidence="11" ref="4">
    <original>T</original>
    <variation>K</variation>
    <location>
        <position position="211"/>
    </location>
</feature>
<feature type="sequence conflict" description="In Ref. 4; AA sequence." evidence="11" ref="4">
    <original>PGA</original>
    <variation>AGP</variation>
    <location>
        <begin position="298"/>
        <end position="300"/>
    </location>
</feature>
<feature type="sequence conflict" description="In Ref. 5; AA sequence." evidence="11" ref="5">
    <original>AT</original>
    <variation>TA</variation>
    <location>
        <begin position="423"/>
        <end position="424"/>
    </location>
</feature>
<sequence length="1364" mass="129064">MLSFVDTRTLLLLAVTSCLATCQSLQEATARKGPSGDRGPRGERGPPGPPGRDGDDGIPGPPGPPGPPGPPGLGGNFAAQFDAKGGGPGPMGLMGPRGPPGASGAPGPQGFQGPPGEPGEPGQTGPAGARGPPGPPGKAGEDGHPGKPGRPGERGVVGPQGARGFPGTPGLPGFKGIRGHNGLDGLKGQPGAPGVKGEPGAPGENGTPGQTGARGLPGERGRVGAPGPAGARGSDGSVGPVGPAGPIGSAGPPGFPGAPGPKGELGPVGNPGPAGPAGPRGEVGLPGLSGPVGPPGNPGANGLPGAKGAAGLPGVAGAPGLPGPRGIPGPVGAAGATGARGLVGEPGPAGSKGESGNKGEPGAVGQPGPPGPSGEEGKRGSTGEIGPAGPPGPPGLRGNPGSRGLPGADGRAGVMGPAGSRGATGPAGVRGPNGDSGRPGEPGLMGPRGFPGSPGNIGPAGKEGPVGLPGIDGRPGPIGPAGARGEPGNIGFPGPKGPSGDPGKAGEKGHAGLAGARGAPGPDGNNGAQGPPGLQGVQGGKGEQGPAGPPGFQGLPGPAGTAGEAGKPGERGIPGEFGLPGPAGARGERGPPGESGAAGPTGPIGSRGPSGPPGPDGNKGEPGVVGAPGTAGPSGPSGLPGERGAAGIPGGKGEKGETGLRGDIGSPGRDGARGAPGAIGAPGPAGANGDRGEAGPAGPAGPAGPRGSPGERGEVGPAGPNGFAGPAGAAGQPGAKGERGTKGPKGENGPVGPTGPVGAAGPSGPNGPPGPAGSRGDGGPPGATGFPGAAGRTGPPGPSGISGPPGPPGPAGKEGLRGPRGDQGPVGRSGETGASGPPGFVGEKGPSGEPGTAGPPGTPGPQGLLGAPGFLGLPGSRGERGLPGVAGSVGEPGPLGIAGPPGARGPPGNVGNPGVNGAPGEAGRDGNPGNDGPPGRDGQPGHKGERGYPGNAGPVGAAGAPGPQGPVGPVGKHGNRGEPGPAGAVGPAGAVGPRGPSGPQGIRGDKGEPGDKGPRGLPGLKGHNGLQGLPGLAGHHGDQGAPGAVGPAGPRGPAGPSGPAGKDGRIGQPGAVGPAGIRGSQGSQGPAGPPGPPGPPGPPGPSGGGYEFGFDGDFYRADQPRSPTSLRPKDYEVDATLKSLNNQIETLLTPEGSRKNPARTCRDLRLSHPEWSSGYYWIDPNQGCTMDAIKVYCDFSTGETCIRAQPEDIPVKNWYRNSKAKKHVWVGETINGGTQFEYNVEGVTTKEMATQLAFMRLLANHASQNITYHCKNSIAYMDEETGNLKKAVILQGSNDVELVAEGNSRFTYTVLVDGCSKKTNEWQKTIIEYKTNKPSRLPILDIAPLDIGGADQEIRLNIGPVCFK</sequence>
<comment type="function">
    <text>Type I collagen is a member of group I collagen (fibrillar forming collagen).</text>
</comment>
<comment type="subunit">
    <text evidence="3">Trimers of one alpha 2(I) and two alpha 1(I) chains. Interacts (via C-terminus) with TMEM131 (via PapD-L domain); the interaction is direct and is involved in assembly and TRAPPIII ER-to-Golgi transport complex-dependent secretion of collagen.</text>
</comment>
<comment type="subcellular location">
    <subcellularLocation>
        <location evidence="6">Secreted</location>
        <location evidence="6">Extracellular space</location>
        <location evidence="6">Extracellular matrix</location>
    </subcellularLocation>
</comment>
<comment type="tissue specificity">
    <text>Forms the fibrils of tendon, ligaments and bones. In bones the fibrils are mineralized with calcium hydroxyapatite.</text>
</comment>
<comment type="domain">
    <text evidence="1">The C-terminal propeptide, also known as COLFI domain, have crucial roles in tissue growth and repair by controlling both the intracellular assembly of procollagen molecules and the extracellular assembly of collagen fibrils. It binds a calcium ion which is essential for its function (By similarity).</text>
</comment>
<comment type="PTM">
    <text>Prolines at the third position of the tripeptide repeating unit (G-X-Y) are hydroxylated in some or all of the chains.</text>
</comment>
<comment type="similarity">
    <text evidence="6">Belongs to the fibrillar collagen family.</text>
</comment>
<keyword id="KW-0106">Calcium</keyword>
<keyword id="KW-0176">Collagen</keyword>
<keyword id="KW-0903">Direct protein sequencing</keyword>
<keyword id="KW-1015">Disulfide bond</keyword>
<keyword id="KW-0272">Extracellular matrix</keyword>
<keyword id="KW-0325">Glycoprotein</keyword>
<keyword id="KW-0379">Hydroxylation</keyword>
<keyword id="KW-0479">Metal-binding</keyword>
<keyword id="KW-0873">Pyrrolidone carboxylic acid</keyword>
<keyword id="KW-1185">Reference proteome</keyword>
<keyword id="KW-0677">Repeat</keyword>
<keyword id="KW-0964">Secreted</keyword>
<keyword id="KW-0732">Signal</keyword>
<organism>
    <name type="scientific">Bos taurus</name>
    <name type="common">Bovine</name>
    <dbReference type="NCBI Taxonomy" id="9913"/>
    <lineage>
        <taxon>Eukaryota</taxon>
        <taxon>Metazoa</taxon>
        <taxon>Chordata</taxon>
        <taxon>Craniata</taxon>
        <taxon>Vertebrata</taxon>
        <taxon>Euteleostomi</taxon>
        <taxon>Mammalia</taxon>
        <taxon>Eutheria</taxon>
        <taxon>Laurasiatheria</taxon>
        <taxon>Artiodactyla</taxon>
        <taxon>Ruminantia</taxon>
        <taxon>Pecora</taxon>
        <taxon>Bovidae</taxon>
        <taxon>Bovinae</taxon>
        <taxon>Bos</taxon>
    </lineage>
</organism>
<reference key="1">
    <citation type="journal article" date="1998" name="Matrix Biol.">
        <title>The complete cDNA coding sequence for the bovine proalpha2(I) chain of type I procollagen.</title>
        <authorList>
            <person name="Shirai T."/>
            <person name="Hattori S."/>
            <person name="Sakaguchi M."/>
            <person name="Inouye S."/>
            <person name="Kimura A."/>
            <person name="Ebihara T."/>
            <person name="Irie S."/>
            <person name="Nagai Y."/>
            <person name="Hori H."/>
        </authorList>
    </citation>
    <scope>NUCLEOTIDE SEQUENCE [MRNA]</scope>
    <source>
        <tissue>Aorta</tissue>
    </source>
</reference>
<reference key="2">
    <citation type="submission" date="2007-07" db="EMBL/GenBank/DDBJ databases">
        <authorList>
            <consortium name="NIH - Mammalian Gene Collection (MGC) project"/>
        </authorList>
    </citation>
    <scope>NUCLEOTIDE SEQUENCE [LARGE SCALE MRNA]</scope>
    <source>
        <strain>Hereford</strain>
        <tissue>Brain cortex</tissue>
    </source>
</reference>
<reference key="3">
    <citation type="journal article" date="1974" name="Biochim. Biophys. Acta">
        <title>Amino acid sequence of the amino-terminal region of calf skin collagen.</title>
        <authorList>
            <person name="Fietzek P.P."/>
            <person name="Breitkreutz D."/>
            <person name="Kuehn K."/>
        </authorList>
    </citation>
    <scope>PROTEIN SEQUENCE OF 80-98</scope>
    <scope>PYROGLUTAMATE FORMATION AT GLN-80</scope>
    <scope>ALLYSINE AT LYS-84</scope>
    <source>
        <tissue>Skin</tissue>
    </source>
</reference>
<reference key="4">
    <citation type="journal article" date="1975" name="Eur. J. Biochem.">
        <title>The covalent structure of collagen. The amino-acid sequence of alpha2-CB4 from calf-skin collagen.</title>
        <authorList>
            <person name="Fietzek P.P."/>
            <person name="Rexrodt F.W."/>
        </authorList>
    </citation>
    <scope>PROTEIN SEQUENCE OF 95-415</scope>
    <scope>SEQUENCE REVISION</scope>
    <scope>HYDROXYLATION AT PRO-100; PRO-106; PRO-115; PRO-118; PRO-121; PRO-133; PRO-136; PRO-145; PRO-151; PRO-166; PRO-169; PRO-172; LYS-175; PRO-190; PRO-193; LYS-196; PRO-199; PRO-202; PRO-208; PRO-217; PRO-226; PRO-253; PRO-256; PRO-259; LYS-262; PRO-271; PRO-286; PRO-295; PRO-304; LYS-307; PRO-313; PRO-319; PRO-322; PRO-328; PRO-346; LYS-352; PRO-361; PRO-367; PRO-370; PRO-391; PRO-394; PRO-400 AND PRO-406</scope>
    <source>
        <tissue>Skin</tissue>
    </source>
</reference>
<reference key="5">
    <citation type="journal article" date="1974" name="Eur. J. Biochem.">
        <title>Comparative sequence studies on alpha2-CB2 from calf, human, rabbit and pig-skin collagen.</title>
        <authorList>
            <person name="Fietzek P.P."/>
            <person name="Furthmayr H."/>
            <person name="Kuehn K."/>
        </authorList>
    </citation>
    <scope>PROTEIN SEQUENCE OF 416-445</scope>
    <scope>HYDROXYLATION AT PRO-439 AND PRO-442</scope>
    <source>
        <tissue>Skin</tissue>
    </source>
</reference>
<reference key="6">
    <citation type="journal article" date="1974" name="Hoppe-Seyler's Z. Physiol. Chem.">
        <title>The covalent structure of collagen: amino acid sequence of the N-terminal region of alpha2-CB3 from rat skin collagen and alpha2-CB3.5 from calf skin collagen.</title>
        <authorList>
            <person name="Fietzek P.P."/>
            <person name="Kuehn K."/>
        </authorList>
    </citation>
    <scope>PROTEIN SEQUENCE OF 446-481</scope>
    <source>
        <tissue>Skin</tissue>
    </source>
</reference>
<evidence type="ECO:0000250" key="1"/>
<evidence type="ECO:0000250" key="2">
    <source>
        <dbReference type="UniProtKB" id="P02466"/>
    </source>
</evidence>
<evidence type="ECO:0000250" key="3">
    <source>
        <dbReference type="UniProtKB" id="P08123"/>
    </source>
</evidence>
<evidence type="ECO:0000250" key="4">
    <source>
        <dbReference type="UniProtKB" id="Q03692"/>
    </source>
</evidence>
<evidence type="ECO:0000255" key="5"/>
<evidence type="ECO:0000255" key="6">
    <source>
        <dbReference type="PROSITE-ProRule" id="PRU00793"/>
    </source>
</evidence>
<evidence type="ECO:0000256" key="7">
    <source>
        <dbReference type="SAM" id="MobiDB-lite"/>
    </source>
</evidence>
<evidence type="ECO:0000269" key="8">
    <source>
    </source>
</evidence>
<evidence type="ECO:0000269" key="9">
    <source>
    </source>
</evidence>
<evidence type="ECO:0000269" key="10">
    <source>
    </source>
</evidence>
<evidence type="ECO:0000305" key="11"/>
<evidence type="ECO:0000305" key="12">
    <source>
    </source>
</evidence>
<accession>P02465</accession>
<accession>A6QP13</accession>
<accession>O62649</accession>
<proteinExistence type="evidence at protein level"/>
<dbReference type="EMBL" id="AB008683">
    <property type="protein sequence ID" value="BAA25171.1"/>
    <property type="molecule type" value="mRNA"/>
</dbReference>
<dbReference type="EMBL" id="BC149095">
    <property type="protein sequence ID" value="AAI49096.1"/>
    <property type="molecule type" value="mRNA"/>
</dbReference>
<dbReference type="PIR" id="A90596">
    <property type="entry name" value="CGBO2S"/>
</dbReference>
<dbReference type="RefSeq" id="NP_776945.1">
    <property type="nucleotide sequence ID" value="NM_174520.2"/>
</dbReference>
<dbReference type="ComplexPortal" id="CPX-3101">
    <property type="entry name" value="Collagen type I trimer"/>
</dbReference>
<dbReference type="FunCoup" id="P02465">
    <property type="interactions" value="368"/>
</dbReference>
<dbReference type="IntAct" id="P02465">
    <property type="interactions" value="1"/>
</dbReference>
<dbReference type="MINT" id="P02465"/>
<dbReference type="STRING" id="9913.ENSBTAP00000033771"/>
<dbReference type="Allergome" id="3550">
    <property type="allergen name" value="Bos d alpha2I.0101"/>
</dbReference>
<dbReference type="Allergome" id="896">
    <property type="allergen name" value="Bos d alpha2I"/>
</dbReference>
<dbReference type="GlyCosmos" id="P02465">
    <property type="glycosylation" value="2 sites, No reported glycans"/>
</dbReference>
<dbReference type="GlyGen" id="P02465">
    <property type="glycosylation" value="2 sites"/>
</dbReference>
<dbReference type="PaxDb" id="9913-ENSBTAP00000033771"/>
<dbReference type="PeptideAtlas" id="P02465"/>
<dbReference type="Ensembl" id="ENSBTAT00000033863.6">
    <property type="protein sequence ID" value="ENSBTAP00000033771.4"/>
    <property type="gene ID" value="ENSBTAG00000013472.7"/>
</dbReference>
<dbReference type="GeneID" id="282188"/>
<dbReference type="KEGG" id="bta:282188"/>
<dbReference type="CTD" id="1278"/>
<dbReference type="VEuPathDB" id="HostDB:ENSBTAG00000013472"/>
<dbReference type="VGNC" id="VGNC:27561">
    <property type="gene designation" value="COL1A2"/>
</dbReference>
<dbReference type="eggNOG" id="KOG3544">
    <property type="taxonomic scope" value="Eukaryota"/>
</dbReference>
<dbReference type="GeneTree" id="ENSGT00940000155639"/>
<dbReference type="HOGENOM" id="CLU_001074_2_3_1"/>
<dbReference type="InParanoid" id="P02465"/>
<dbReference type="OMA" id="SFYWIDP"/>
<dbReference type="OrthoDB" id="8939548at2759"/>
<dbReference type="TreeFam" id="TF344135"/>
<dbReference type="Reactome" id="R-BTA-114604">
    <property type="pathway name" value="GPVI-mediated activation cascade"/>
</dbReference>
<dbReference type="Reactome" id="R-BTA-1442490">
    <property type="pathway name" value="Collagen degradation"/>
</dbReference>
<dbReference type="Reactome" id="R-BTA-1474244">
    <property type="pathway name" value="Extracellular matrix organization"/>
</dbReference>
<dbReference type="Reactome" id="R-BTA-1650814">
    <property type="pathway name" value="Collagen biosynthesis and modifying enzymes"/>
</dbReference>
<dbReference type="Reactome" id="R-BTA-198933">
    <property type="pathway name" value="Immunoregulatory interactions between a Lymphoid and a non-Lymphoid cell"/>
</dbReference>
<dbReference type="Reactome" id="R-BTA-2022090">
    <property type="pathway name" value="Assembly of collagen fibrils and other multimeric structures"/>
</dbReference>
<dbReference type="Reactome" id="R-BTA-202733">
    <property type="pathway name" value="Cell surface interactions at the vascular wall"/>
</dbReference>
<dbReference type="Reactome" id="R-BTA-216083">
    <property type="pathway name" value="Integrin cell surface interactions"/>
</dbReference>
<dbReference type="Reactome" id="R-BTA-2243919">
    <property type="pathway name" value="Crosslinking of collagen fibrils"/>
</dbReference>
<dbReference type="Reactome" id="R-BTA-3000171">
    <property type="pathway name" value="Non-integrin membrane-ECM interactions"/>
</dbReference>
<dbReference type="Reactome" id="R-BTA-3000178">
    <property type="pathway name" value="ECM proteoglycans"/>
</dbReference>
<dbReference type="Reactome" id="R-BTA-430116">
    <property type="pathway name" value="GP1b-IX-V activation signalling"/>
</dbReference>
<dbReference type="Reactome" id="R-BTA-75892">
    <property type="pathway name" value="Platelet Adhesion to exposed collagen"/>
</dbReference>
<dbReference type="Reactome" id="R-BTA-76009">
    <property type="pathway name" value="Platelet Aggregation (Plug Formation)"/>
</dbReference>
<dbReference type="Reactome" id="R-BTA-8874081">
    <property type="pathway name" value="MET activates PTK2 signaling"/>
</dbReference>
<dbReference type="Reactome" id="R-BTA-8948216">
    <property type="pathway name" value="Collagen chain trimerization"/>
</dbReference>
<dbReference type="Proteomes" id="UP000009136">
    <property type="component" value="Chromosome 4"/>
</dbReference>
<dbReference type="Bgee" id="ENSBTAG00000013472">
    <property type="expression patterns" value="Expressed in uterine cervix and 105 other cell types or tissues"/>
</dbReference>
<dbReference type="GO" id="GO:0005584">
    <property type="term" value="C:collagen type I trimer"/>
    <property type="evidence" value="ECO:0000318"/>
    <property type="project" value="GO_Central"/>
</dbReference>
<dbReference type="GO" id="GO:0062023">
    <property type="term" value="C:collagen-containing extracellular matrix"/>
    <property type="evidence" value="ECO:0000318"/>
    <property type="project" value="GO_Central"/>
</dbReference>
<dbReference type="GO" id="GO:0005615">
    <property type="term" value="C:extracellular space"/>
    <property type="evidence" value="ECO:0000318"/>
    <property type="project" value="GO_Central"/>
</dbReference>
<dbReference type="GO" id="GO:0030020">
    <property type="term" value="F:extracellular matrix structural constituent conferring tensile strength"/>
    <property type="evidence" value="ECO:0000318"/>
    <property type="project" value="GO_Central"/>
</dbReference>
<dbReference type="GO" id="GO:0046872">
    <property type="term" value="F:metal ion binding"/>
    <property type="evidence" value="ECO:0007669"/>
    <property type="project" value="UniProtKB-KW"/>
</dbReference>
<dbReference type="FunFam" id="2.60.120.1000:FF:000001">
    <property type="entry name" value="Collagen alpha-1 type I chain"/>
    <property type="match status" value="1"/>
</dbReference>
<dbReference type="Gene3D" id="2.60.120.1000">
    <property type="match status" value="1"/>
</dbReference>
<dbReference type="InterPro" id="IPR008160">
    <property type="entry name" value="Collagen"/>
</dbReference>
<dbReference type="InterPro" id="IPR050149">
    <property type="entry name" value="Collagen_superfamily"/>
</dbReference>
<dbReference type="InterPro" id="IPR000885">
    <property type="entry name" value="Fib_collagen_C"/>
</dbReference>
<dbReference type="PANTHER" id="PTHR24023">
    <property type="entry name" value="COLLAGEN ALPHA"/>
    <property type="match status" value="1"/>
</dbReference>
<dbReference type="PANTHER" id="PTHR24023:SF568">
    <property type="entry name" value="COLLAGEN ALPHA-2(I) CHAIN"/>
    <property type="match status" value="1"/>
</dbReference>
<dbReference type="Pfam" id="PF01410">
    <property type="entry name" value="COLFI"/>
    <property type="match status" value="1"/>
</dbReference>
<dbReference type="Pfam" id="PF01391">
    <property type="entry name" value="Collagen"/>
    <property type="match status" value="10"/>
</dbReference>
<dbReference type="SMART" id="SM00038">
    <property type="entry name" value="COLFI"/>
    <property type="match status" value="1"/>
</dbReference>
<dbReference type="PROSITE" id="PS51461">
    <property type="entry name" value="NC1_FIB"/>
    <property type="match status" value="1"/>
</dbReference>
<protein>
    <recommendedName>
        <fullName>Collagen alpha-2(I) chain</fullName>
    </recommendedName>
    <alternativeName>
        <fullName>Alpha-2 type I collagen</fullName>
    </alternativeName>
</protein>